<evidence type="ECO:0007829" key="1">
    <source>
        <dbReference type="PDB" id="2KTS"/>
    </source>
</evidence>
<dbReference type="EMBL" id="U36928">
    <property type="status" value="NOT_ANNOTATED_CDS"/>
    <property type="molecule type" value="Genomic_DNA"/>
</dbReference>
<dbReference type="EMBL" id="U00096">
    <property type="protein sequence ID" value="AAC74461.1"/>
    <property type="molecule type" value="Genomic_DNA"/>
</dbReference>
<dbReference type="EMBL" id="AP009048">
    <property type="protein sequence ID" value="BAA14984.1"/>
    <property type="molecule type" value="Genomic_DNA"/>
</dbReference>
<dbReference type="PIR" id="F64888">
    <property type="entry name" value="F64888"/>
</dbReference>
<dbReference type="RefSeq" id="NP_415897.1">
    <property type="nucleotide sequence ID" value="NC_000913.3"/>
</dbReference>
<dbReference type="RefSeq" id="WP_001298828.1">
    <property type="nucleotide sequence ID" value="NZ_STEB01000005.1"/>
</dbReference>
<dbReference type="PDB" id="2KTS">
    <property type="method" value="NMR"/>
    <property type="chains" value="A=25-140"/>
</dbReference>
<dbReference type="PDBsum" id="2KTS"/>
<dbReference type="BMRB" id="P52644"/>
<dbReference type="SMR" id="P52644"/>
<dbReference type="BioGRID" id="4259447">
    <property type="interactions" value="19"/>
</dbReference>
<dbReference type="DIP" id="DIP-9946N"/>
<dbReference type="FunCoup" id="P52644">
    <property type="interactions" value="29"/>
</dbReference>
<dbReference type="STRING" id="511145.b1379"/>
<dbReference type="jPOST" id="P52644"/>
<dbReference type="PaxDb" id="511145-b1379"/>
<dbReference type="DNASU" id="946525"/>
<dbReference type="EnsemblBacteria" id="AAC74461">
    <property type="protein sequence ID" value="AAC74461"/>
    <property type="gene ID" value="b1379"/>
</dbReference>
<dbReference type="GeneID" id="93775543"/>
<dbReference type="GeneID" id="946525"/>
<dbReference type="KEGG" id="ecj:JW1374"/>
<dbReference type="KEGG" id="eco:b1379"/>
<dbReference type="KEGG" id="ecoc:C3026_08060"/>
<dbReference type="PATRIC" id="fig|1411691.4.peg.893"/>
<dbReference type="EchoBASE" id="EB2973"/>
<dbReference type="eggNOG" id="COG3187">
    <property type="taxonomic scope" value="Bacteria"/>
</dbReference>
<dbReference type="HOGENOM" id="CLU_075808_1_0_6"/>
<dbReference type="InParanoid" id="P52644"/>
<dbReference type="OMA" id="GVMCNRF"/>
<dbReference type="OrthoDB" id="5600341at2"/>
<dbReference type="PhylomeDB" id="P52644"/>
<dbReference type="BioCyc" id="EcoCyc:G6702-MONOMER"/>
<dbReference type="EvolutionaryTrace" id="P52644"/>
<dbReference type="PRO" id="PR:P52644"/>
<dbReference type="Proteomes" id="UP000000625">
    <property type="component" value="Chromosome"/>
</dbReference>
<dbReference type="GO" id="GO:0009408">
    <property type="term" value="P:response to heat"/>
    <property type="evidence" value="ECO:0000270"/>
    <property type="project" value="EcoliWiki"/>
</dbReference>
<dbReference type="FunFam" id="2.40.128.270:FF:000001">
    <property type="entry name" value="Heat shock protein HslJ"/>
    <property type="match status" value="1"/>
</dbReference>
<dbReference type="Gene3D" id="2.40.128.270">
    <property type="match status" value="1"/>
</dbReference>
<dbReference type="InterPro" id="IPR005184">
    <property type="entry name" value="DUF306_Meta_HslJ"/>
</dbReference>
<dbReference type="InterPro" id="IPR038670">
    <property type="entry name" value="HslJ-like_sf"/>
</dbReference>
<dbReference type="InterPro" id="IPR053147">
    <property type="entry name" value="Hsp_HslJ-like"/>
</dbReference>
<dbReference type="NCBIfam" id="NF007766">
    <property type="entry name" value="PRK10449.1"/>
    <property type="match status" value="1"/>
</dbReference>
<dbReference type="PANTHER" id="PTHR35535">
    <property type="entry name" value="HEAT SHOCK PROTEIN HSLJ"/>
    <property type="match status" value="1"/>
</dbReference>
<dbReference type="PANTHER" id="PTHR35535:SF1">
    <property type="entry name" value="HEAT SHOCK PROTEIN HSLJ"/>
    <property type="match status" value="1"/>
</dbReference>
<dbReference type="Pfam" id="PF03724">
    <property type="entry name" value="META"/>
    <property type="match status" value="1"/>
</dbReference>
<feature type="chain" id="PRO_0000084080" description="Heat shock protein HslJ">
    <location>
        <begin position="1"/>
        <end position="140"/>
    </location>
</feature>
<feature type="turn" evidence="1">
    <location>
        <begin position="28"/>
        <end position="32"/>
    </location>
</feature>
<feature type="strand" evidence="1">
    <location>
        <begin position="35"/>
        <end position="42"/>
    </location>
</feature>
<feature type="strand" evidence="1">
    <location>
        <begin position="53"/>
        <end position="57"/>
    </location>
</feature>
<feature type="helix" evidence="1">
    <location>
        <begin position="58"/>
        <end position="60"/>
    </location>
</feature>
<feature type="strand" evidence="1">
    <location>
        <begin position="61"/>
        <end position="64"/>
    </location>
</feature>
<feature type="strand" evidence="1">
    <location>
        <begin position="66"/>
        <end position="68"/>
    </location>
</feature>
<feature type="strand" evidence="1">
    <location>
        <begin position="70"/>
        <end position="72"/>
    </location>
</feature>
<feature type="strand" evidence="1">
    <location>
        <begin position="77"/>
        <end position="81"/>
    </location>
</feature>
<feature type="strand" evidence="1">
    <location>
        <begin position="84"/>
        <end position="88"/>
    </location>
</feature>
<feature type="helix" evidence="1">
    <location>
        <begin position="96"/>
        <end position="111"/>
    </location>
</feature>
<feature type="strand" evidence="1">
    <location>
        <begin position="113"/>
        <end position="117"/>
    </location>
</feature>
<feature type="strand" evidence="1">
    <location>
        <begin position="119"/>
        <end position="125"/>
    </location>
</feature>
<feature type="strand" evidence="1">
    <location>
        <begin position="130"/>
        <end position="134"/>
    </location>
</feature>
<sequence length="140" mass="15166">MKKVAAFVALSLLMAGCVSNDKIAVTPEQLQHHRFVLESVNGKPVTSDKNPPEISFGEKMMISGSMCNRFSGEGKLSNGELTAKGLAMTRMMCANPQLNELDNTISEMLKEGAQVDLTANQLTLATAKQTLTYKLADLMN</sequence>
<reference key="1">
    <citation type="journal article" date="1997" name="Microbiology">
        <title>The ldhA gene encoding the fermentative lactate dehydrogenase of Escherichia coli.</title>
        <authorList>
            <person name="Bunch P.K."/>
            <person name="Mat-Jan F."/>
            <person name="Lee N."/>
            <person name="Clark D.P."/>
        </authorList>
    </citation>
    <scope>NUCLEOTIDE SEQUENCE [GENOMIC DNA]</scope>
    <source>
        <strain>K12</strain>
    </source>
</reference>
<reference key="2">
    <citation type="journal article" date="1996" name="DNA Res.">
        <title>A 570-kb DNA sequence of the Escherichia coli K-12 genome corresponding to the 28.0-40.1 min region on the linkage map.</title>
        <authorList>
            <person name="Aiba H."/>
            <person name="Baba T."/>
            <person name="Fujita K."/>
            <person name="Hayashi K."/>
            <person name="Inada T."/>
            <person name="Isono K."/>
            <person name="Itoh T."/>
            <person name="Kasai H."/>
            <person name="Kashimoto K."/>
            <person name="Kimura S."/>
            <person name="Kitakawa M."/>
            <person name="Kitagawa M."/>
            <person name="Makino K."/>
            <person name="Miki T."/>
            <person name="Mizobuchi K."/>
            <person name="Mori H."/>
            <person name="Mori T."/>
            <person name="Motomura K."/>
            <person name="Nakade S."/>
            <person name="Nakamura Y."/>
            <person name="Nashimoto H."/>
            <person name="Nishio Y."/>
            <person name="Oshima T."/>
            <person name="Saito N."/>
            <person name="Sampei G."/>
            <person name="Seki Y."/>
            <person name="Sivasundaram S."/>
            <person name="Tagami H."/>
            <person name="Takeda J."/>
            <person name="Takemoto K."/>
            <person name="Takeuchi Y."/>
            <person name="Wada C."/>
            <person name="Yamamoto Y."/>
            <person name="Horiuchi T."/>
        </authorList>
    </citation>
    <scope>NUCLEOTIDE SEQUENCE [LARGE SCALE GENOMIC DNA]</scope>
    <source>
        <strain>K12 / W3110 / ATCC 27325 / DSM 5911</strain>
    </source>
</reference>
<reference key="3">
    <citation type="journal article" date="1997" name="Science">
        <title>The complete genome sequence of Escherichia coli K-12.</title>
        <authorList>
            <person name="Blattner F.R."/>
            <person name="Plunkett G. III"/>
            <person name="Bloch C.A."/>
            <person name="Perna N.T."/>
            <person name="Burland V."/>
            <person name="Riley M."/>
            <person name="Collado-Vides J."/>
            <person name="Glasner J.D."/>
            <person name="Rode C.K."/>
            <person name="Mayhew G.F."/>
            <person name="Gregor J."/>
            <person name="Davis N.W."/>
            <person name="Kirkpatrick H.A."/>
            <person name="Goeden M.A."/>
            <person name="Rose D.J."/>
            <person name="Mau B."/>
            <person name="Shao Y."/>
        </authorList>
    </citation>
    <scope>NUCLEOTIDE SEQUENCE [LARGE SCALE GENOMIC DNA]</scope>
    <source>
        <strain>K12 / MG1655 / ATCC 47076</strain>
    </source>
</reference>
<reference key="4">
    <citation type="journal article" date="2006" name="Mol. Syst. Biol.">
        <title>Highly accurate genome sequences of Escherichia coli K-12 strains MG1655 and W3110.</title>
        <authorList>
            <person name="Hayashi K."/>
            <person name="Morooka N."/>
            <person name="Yamamoto Y."/>
            <person name="Fujita K."/>
            <person name="Isono K."/>
            <person name="Choi S."/>
            <person name="Ohtsubo E."/>
            <person name="Baba T."/>
            <person name="Wanner B.L."/>
            <person name="Mori H."/>
            <person name="Horiuchi T."/>
        </authorList>
    </citation>
    <scope>NUCLEOTIDE SEQUENCE [LARGE SCALE GENOMIC DNA]</scope>
    <source>
        <strain>K12 / W3110 / ATCC 27325 / DSM 5911</strain>
    </source>
</reference>
<reference key="5">
    <citation type="unpublished observations" date="1996-03">
        <authorList>
            <person name="Rudd K.E."/>
        </authorList>
    </citation>
    <scope>IDENTIFICATION</scope>
</reference>
<reference key="6">
    <citation type="journal article" date="1993" name="J. Bacteriol.">
        <title>Characterization of twenty-six new heat shock genes of Escherichia coli.</title>
        <authorList>
            <person name="Chuang S.E."/>
            <person name="Blattner F.R."/>
        </authorList>
    </citation>
    <scope>CHARACTERIZATION AS A HEAT-SHOCK GENE</scope>
</reference>
<organism>
    <name type="scientific">Escherichia coli (strain K12)</name>
    <dbReference type="NCBI Taxonomy" id="83333"/>
    <lineage>
        <taxon>Bacteria</taxon>
        <taxon>Pseudomonadati</taxon>
        <taxon>Pseudomonadota</taxon>
        <taxon>Gammaproteobacteria</taxon>
        <taxon>Enterobacterales</taxon>
        <taxon>Enterobacteriaceae</taxon>
        <taxon>Escherichia</taxon>
    </lineage>
</organism>
<name>HSLJ_ECOLI</name>
<accession>P52644</accession>
<proteinExistence type="evidence at protein level"/>
<protein>
    <recommendedName>
        <fullName>Heat shock protein HslJ</fullName>
    </recommendedName>
</protein>
<gene>
    <name type="primary">hslJ</name>
    <name type="synonym">ydbI</name>
    <name type="ordered locus">b1379</name>
    <name type="ordered locus">JW1374</name>
</gene>
<keyword id="KW-0002">3D-structure</keyword>
<keyword id="KW-1185">Reference proteome</keyword>
<keyword id="KW-0346">Stress response</keyword>